<reference key="1">
    <citation type="journal article" date="1997" name="Proc. Natl. Acad. Sci. U.S.A.">
        <title>The complete mitochondrial genome of the wallaroo (Macropus robustus) and the phylogenetic relationship among Monotremata, Marsupialia, and Eutheria.</title>
        <authorList>
            <person name="Janke A."/>
            <person name="Xu X."/>
            <person name="Arnason U."/>
        </authorList>
    </citation>
    <scope>NUCLEOTIDE SEQUENCE [GENOMIC DNA]</scope>
</reference>
<gene>
    <name evidence="1" type="primary">MT-ND3</name>
    <name type="synonym">MTND3</name>
    <name type="synonym">NADH3</name>
    <name type="synonym">ND3</name>
</gene>
<name>NU3M_OSPRO</name>
<comment type="function">
    <text evidence="1">Core subunit of the mitochondrial membrane respiratory chain NADH dehydrogenase (Complex I) which catalyzes electron transfer from NADH through the respiratory chain, using ubiquinone as an electron acceptor. Essential for the catalytic activity of complex I.</text>
</comment>
<comment type="catalytic activity">
    <reaction evidence="1">
        <text>a ubiquinone + NADH + 5 H(+)(in) = a ubiquinol + NAD(+) + 4 H(+)(out)</text>
        <dbReference type="Rhea" id="RHEA:29091"/>
        <dbReference type="Rhea" id="RHEA-COMP:9565"/>
        <dbReference type="Rhea" id="RHEA-COMP:9566"/>
        <dbReference type="ChEBI" id="CHEBI:15378"/>
        <dbReference type="ChEBI" id="CHEBI:16389"/>
        <dbReference type="ChEBI" id="CHEBI:17976"/>
        <dbReference type="ChEBI" id="CHEBI:57540"/>
        <dbReference type="ChEBI" id="CHEBI:57945"/>
        <dbReference type="EC" id="7.1.1.2"/>
    </reaction>
</comment>
<comment type="subunit">
    <text evidence="1">Core subunit of respiratory chain NADH dehydrogenase (Complex I) which is composed of 45 different subunits. Interacts with TMEM186. Interacts with TMEM242 (By similarity).</text>
</comment>
<comment type="subcellular location">
    <subcellularLocation>
        <location evidence="2">Mitochondrion inner membrane</location>
        <topology evidence="3">Multi-pass membrane protein</topology>
    </subcellularLocation>
</comment>
<comment type="similarity">
    <text evidence="4">Belongs to the complex I subunit 3 family.</text>
</comment>
<dbReference type="EC" id="7.1.1.2" evidence="1"/>
<dbReference type="EMBL" id="Y10524">
    <property type="protein sequence ID" value="CAA71543.1"/>
    <property type="molecule type" value="Genomic_DNA"/>
</dbReference>
<dbReference type="PIR" id="T11435">
    <property type="entry name" value="T11435"/>
</dbReference>
<dbReference type="RefSeq" id="NP_007401.1">
    <property type="nucleotide sequence ID" value="NC_001794.1"/>
</dbReference>
<dbReference type="SMR" id="P92666"/>
<dbReference type="GeneID" id="808073"/>
<dbReference type="CTD" id="4537"/>
<dbReference type="GO" id="GO:0005743">
    <property type="term" value="C:mitochondrial inner membrane"/>
    <property type="evidence" value="ECO:0000250"/>
    <property type="project" value="UniProtKB"/>
</dbReference>
<dbReference type="GO" id="GO:0030964">
    <property type="term" value="C:NADH dehydrogenase complex"/>
    <property type="evidence" value="ECO:0007669"/>
    <property type="project" value="TreeGrafter"/>
</dbReference>
<dbReference type="GO" id="GO:0008137">
    <property type="term" value="F:NADH dehydrogenase (ubiquinone) activity"/>
    <property type="evidence" value="ECO:0000250"/>
    <property type="project" value="UniProtKB"/>
</dbReference>
<dbReference type="GO" id="GO:0006120">
    <property type="term" value="P:mitochondrial electron transport, NADH to ubiquinone"/>
    <property type="evidence" value="ECO:0000250"/>
    <property type="project" value="UniProtKB"/>
</dbReference>
<dbReference type="FunFam" id="1.20.58.1610:FF:000004">
    <property type="entry name" value="NADH-quinone oxidoreductase subunit A"/>
    <property type="match status" value="1"/>
</dbReference>
<dbReference type="Gene3D" id="1.20.58.1610">
    <property type="entry name" value="NADH:ubiquinone/plastoquinone oxidoreductase, chain 3"/>
    <property type="match status" value="1"/>
</dbReference>
<dbReference type="InterPro" id="IPR000440">
    <property type="entry name" value="NADH_UbQ/plastoQ_OxRdtase_su3"/>
</dbReference>
<dbReference type="InterPro" id="IPR038430">
    <property type="entry name" value="NDAH_ubi_oxred_su3_sf"/>
</dbReference>
<dbReference type="PANTHER" id="PTHR11058">
    <property type="entry name" value="NADH-UBIQUINONE OXIDOREDUCTASE CHAIN 3"/>
    <property type="match status" value="1"/>
</dbReference>
<dbReference type="PANTHER" id="PTHR11058:SF9">
    <property type="entry name" value="NADH-UBIQUINONE OXIDOREDUCTASE CHAIN 3"/>
    <property type="match status" value="1"/>
</dbReference>
<dbReference type="Pfam" id="PF00507">
    <property type="entry name" value="Oxidored_q4"/>
    <property type="match status" value="1"/>
</dbReference>
<evidence type="ECO:0000250" key="1">
    <source>
        <dbReference type="UniProtKB" id="P03897"/>
    </source>
</evidence>
<evidence type="ECO:0000250" key="2">
    <source>
        <dbReference type="UniProtKB" id="P03898"/>
    </source>
</evidence>
<evidence type="ECO:0000255" key="3"/>
<evidence type="ECO:0000305" key="4"/>
<accession>P92666</accession>
<protein>
    <recommendedName>
        <fullName evidence="1">NADH-ubiquinone oxidoreductase chain 3</fullName>
        <ecNumber evidence="1">7.1.1.2</ecNumber>
    </recommendedName>
    <alternativeName>
        <fullName>NADH dehydrogenase subunit 3</fullName>
    </alternativeName>
</protein>
<feature type="chain" id="PRO_0000117760" description="NADH-ubiquinone oxidoreductase chain 3">
    <location>
        <begin position="1"/>
        <end position="116"/>
    </location>
</feature>
<feature type="transmembrane region" description="Helical" evidence="3">
    <location>
        <begin position="4"/>
        <end position="24"/>
    </location>
</feature>
<feature type="transmembrane region" description="Helical" evidence="3">
    <location>
        <begin position="56"/>
        <end position="76"/>
    </location>
</feature>
<feature type="transmembrane region" description="Helical" evidence="3">
    <location>
        <begin position="88"/>
        <end position="108"/>
    </location>
</feature>
<keyword id="KW-0249">Electron transport</keyword>
<keyword id="KW-0472">Membrane</keyword>
<keyword id="KW-0496">Mitochondrion</keyword>
<keyword id="KW-0999">Mitochondrion inner membrane</keyword>
<keyword id="KW-0520">NAD</keyword>
<keyword id="KW-0679">Respiratory chain</keyword>
<keyword id="KW-1278">Translocase</keyword>
<keyword id="KW-0812">Transmembrane</keyword>
<keyword id="KW-1133">Transmembrane helix</keyword>
<keyword id="KW-0813">Transport</keyword>
<keyword id="KW-0830">Ubiquinone</keyword>
<sequence>MINLIITLIINTALSTIIVLIAFWLPQLYLYLEKSSPYECGFDPLGSARLPFSMKFFLIAITFLLFDLEIALLLPLPWAMQLPTPNLTLILAYCLIILLTAGLAYEWIQKGLEWSE</sequence>
<organism>
    <name type="scientific">Osphranter robustus</name>
    <name type="common">Wallaroo</name>
    <name type="synonym">Macropus robustus</name>
    <dbReference type="NCBI Taxonomy" id="9319"/>
    <lineage>
        <taxon>Eukaryota</taxon>
        <taxon>Metazoa</taxon>
        <taxon>Chordata</taxon>
        <taxon>Craniata</taxon>
        <taxon>Vertebrata</taxon>
        <taxon>Euteleostomi</taxon>
        <taxon>Mammalia</taxon>
        <taxon>Metatheria</taxon>
        <taxon>Diprotodontia</taxon>
        <taxon>Macropodidae</taxon>
        <taxon>Osphranter</taxon>
    </lineage>
</organism>
<geneLocation type="mitochondrion"/>
<proteinExistence type="inferred from homology"/>